<reference key="1">
    <citation type="submission" date="1999-04" db="EMBL/GenBank/DDBJ databases">
        <title>Isolation and characterization of the GCN5 gene of Yarrowia lipolytica.</title>
        <authorList>
            <person name="Gonzalez-Prieto J."/>
            <person name="Dominguez-Olavarri A."/>
            <person name="Ruiz-Herrera J."/>
        </authorList>
    </citation>
    <scope>NUCLEOTIDE SEQUENCE [GENOMIC DNA]</scope>
    <source>
        <strain>INAG 35668</strain>
    </source>
</reference>
<reference key="2">
    <citation type="journal article" date="2004" name="Nature">
        <title>Genome evolution in yeasts.</title>
        <authorList>
            <person name="Dujon B."/>
            <person name="Sherman D."/>
            <person name="Fischer G."/>
            <person name="Durrens P."/>
            <person name="Casaregola S."/>
            <person name="Lafontaine I."/>
            <person name="de Montigny J."/>
            <person name="Marck C."/>
            <person name="Neuveglise C."/>
            <person name="Talla E."/>
            <person name="Goffard N."/>
            <person name="Frangeul L."/>
            <person name="Aigle M."/>
            <person name="Anthouard V."/>
            <person name="Babour A."/>
            <person name="Barbe V."/>
            <person name="Barnay S."/>
            <person name="Blanchin S."/>
            <person name="Beckerich J.-M."/>
            <person name="Beyne E."/>
            <person name="Bleykasten C."/>
            <person name="Boisrame A."/>
            <person name="Boyer J."/>
            <person name="Cattolico L."/>
            <person name="Confanioleri F."/>
            <person name="de Daruvar A."/>
            <person name="Despons L."/>
            <person name="Fabre E."/>
            <person name="Fairhead C."/>
            <person name="Ferry-Dumazet H."/>
            <person name="Groppi A."/>
            <person name="Hantraye F."/>
            <person name="Hennequin C."/>
            <person name="Jauniaux N."/>
            <person name="Joyet P."/>
            <person name="Kachouri R."/>
            <person name="Kerrest A."/>
            <person name="Koszul R."/>
            <person name="Lemaire M."/>
            <person name="Lesur I."/>
            <person name="Ma L."/>
            <person name="Muller H."/>
            <person name="Nicaud J.-M."/>
            <person name="Nikolski M."/>
            <person name="Oztas S."/>
            <person name="Ozier-Kalogeropoulos O."/>
            <person name="Pellenz S."/>
            <person name="Potier S."/>
            <person name="Richard G.-F."/>
            <person name="Straub M.-L."/>
            <person name="Suleau A."/>
            <person name="Swennen D."/>
            <person name="Tekaia F."/>
            <person name="Wesolowski-Louvel M."/>
            <person name="Westhof E."/>
            <person name="Wirth B."/>
            <person name="Zeniou-Meyer M."/>
            <person name="Zivanovic Y."/>
            <person name="Bolotin-Fukuhara M."/>
            <person name="Thierry A."/>
            <person name="Bouchier C."/>
            <person name="Caudron B."/>
            <person name="Scarpelli C."/>
            <person name="Gaillardin C."/>
            <person name="Weissenbach J."/>
            <person name="Wincker P."/>
            <person name="Souciet J.-L."/>
        </authorList>
    </citation>
    <scope>NUCLEOTIDE SEQUENCE [LARGE SCALE GENOMIC DNA]</scope>
    <source>
        <strain>CLIB 122 / E 150</strain>
    </source>
</reference>
<keyword id="KW-0010">Activator</keyword>
<keyword id="KW-0012">Acyltransferase</keyword>
<keyword id="KW-0103">Bromodomain</keyword>
<keyword id="KW-0156">Chromatin regulator</keyword>
<keyword id="KW-0539">Nucleus</keyword>
<keyword id="KW-1185">Reference proteome</keyword>
<keyword id="KW-0804">Transcription</keyword>
<keyword id="KW-0805">Transcription regulation</keyword>
<keyword id="KW-0808">Transferase</keyword>
<organism>
    <name type="scientific">Yarrowia lipolytica (strain CLIB 122 / E 150)</name>
    <name type="common">Yeast</name>
    <name type="synonym">Candida lipolytica</name>
    <dbReference type="NCBI Taxonomy" id="284591"/>
    <lineage>
        <taxon>Eukaryota</taxon>
        <taxon>Fungi</taxon>
        <taxon>Dikarya</taxon>
        <taxon>Ascomycota</taxon>
        <taxon>Saccharomycotina</taxon>
        <taxon>Dipodascomycetes</taxon>
        <taxon>Dipodascales</taxon>
        <taxon>Dipodascales incertae sedis</taxon>
        <taxon>Yarrowia</taxon>
    </lineage>
</organism>
<dbReference type="EC" id="2.3.1.48"/>
<dbReference type="EMBL" id="AJ237940">
    <property type="protein sequence ID" value="CAC80210.1"/>
    <property type="molecule type" value="Genomic_DNA"/>
</dbReference>
<dbReference type="EMBL" id="CR382131">
    <property type="protein sequence ID" value="CAG79052.1"/>
    <property type="molecule type" value="Genomic_DNA"/>
</dbReference>
<dbReference type="RefSeq" id="XP_503473.1">
    <property type="nucleotide sequence ID" value="XM_503473.1"/>
</dbReference>
<dbReference type="SMR" id="Q8WZM0"/>
<dbReference type="FunCoup" id="Q8WZM0">
    <property type="interactions" value="479"/>
</dbReference>
<dbReference type="STRING" id="284591.Q8WZM0"/>
<dbReference type="EnsemblFungi" id="CAG79052">
    <property type="protein sequence ID" value="CAG79052"/>
    <property type="gene ID" value="YALI0_E02772g"/>
</dbReference>
<dbReference type="KEGG" id="yli:2912645"/>
<dbReference type="VEuPathDB" id="FungiDB:YALI0_E02772g"/>
<dbReference type="HOGENOM" id="CLU_015741_2_0_1"/>
<dbReference type="InParanoid" id="Q8WZM0"/>
<dbReference type="OMA" id="HQPPKEW"/>
<dbReference type="OrthoDB" id="115037at4891"/>
<dbReference type="Proteomes" id="UP000001300">
    <property type="component" value="Chromosome E"/>
</dbReference>
<dbReference type="GO" id="GO:0000123">
    <property type="term" value="C:histone acetyltransferase complex"/>
    <property type="evidence" value="ECO:0000318"/>
    <property type="project" value="GO_Central"/>
</dbReference>
<dbReference type="GO" id="GO:0005634">
    <property type="term" value="C:nucleus"/>
    <property type="evidence" value="ECO:0007669"/>
    <property type="project" value="UniProtKB-SubCell"/>
</dbReference>
<dbReference type="GO" id="GO:0000124">
    <property type="term" value="C:SAGA complex"/>
    <property type="evidence" value="ECO:0007669"/>
    <property type="project" value="EnsemblFungi"/>
</dbReference>
<dbReference type="GO" id="GO:0010484">
    <property type="term" value="F:histone H3 acetyltransferase activity"/>
    <property type="evidence" value="ECO:0000318"/>
    <property type="project" value="GO_Central"/>
</dbReference>
<dbReference type="GO" id="GO:0036408">
    <property type="term" value="F:histone H3K14 acetyltransferase activity"/>
    <property type="evidence" value="ECO:0007669"/>
    <property type="project" value="EnsemblFungi"/>
</dbReference>
<dbReference type="GO" id="GO:0043993">
    <property type="term" value="F:histone H3K18 acetyltransferase activity"/>
    <property type="evidence" value="ECO:0007669"/>
    <property type="project" value="EnsemblFungi"/>
</dbReference>
<dbReference type="GO" id="GO:0043992">
    <property type="term" value="F:histone H3K9 acetyltransferase activity"/>
    <property type="evidence" value="ECO:0007669"/>
    <property type="project" value="EnsemblFungi"/>
</dbReference>
<dbReference type="GO" id="GO:0006338">
    <property type="term" value="P:chromatin remodeling"/>
    <property type="evidence" value="ECO:0000318"/>
    <property type="project" value="GO_Central"/>
</dbReference>
<dbReference type="GO" id="GO:0010515">
    <property type="term" value="P:negative regulation of induction of conjugation with cellular fusion"/>
    <property type="evidence" value="ECO:0007669"/>
    <property type="project" value="EnsemblFungi"/>
</dbReference>
<dbReference type="GO" id="GO:0045944">
    <property type="term" value="P:positive regulation of transcription by RNA polymerase II"/>
    <property type="evidence" value="ECO:0000318"/>
    <property type="project" value="GO_Central"/>
</dbReference>
<dbReference type="GO" id="GO:0045815">
    <property type="term" value="P:transcription initiation-coupled chromatin remodeling"/>
    <property type="evidence" value="ECO:0007669"/>
    <property type="project" value="EnsemblFungi"/>
</dbReference>
<dbReference type="CDD" id="cd05509">
    <property type="entry name" value="Bromo_gcn5_like"/>
    <property type="match status" value="1"/>
</dbReference>
<dbReference type="CDD" id="cd04301">
    <property type="entry name" value="NAT_SF"/>
    <property type="match status" value="1"/>
</dbReference>
<dbReference type="FunFam" id="1.20.920.10:FF:000046">
    <property type="entry name" value="Histone acetyltransferase GCN5"/>
    <property type="match status" value="1"/>
</dbReference>
<dbReference type="FunFam" id="3.40.630.30:FF:000004">
    <property type="entry name" value="Histone acetyltransferase KAT2A"/>
    <property type="match status" value="1"/>
</dbReference>
<dbReference type="Gene3D" id="3.40.630.30">
    <property type="match status" value="1"/>
</dbReference>
<dbReference type="Gene3D" id="1.20.920.10">
    <property type="entry name" value="Bromodomain-like"/>
    <property type="match status" value="1"/>
</dbReference>
<dbReference type="InterPro" id="IPR016181">
    <property type="entry name" value="Acyl_CoA_acyltransferase"/>
</dbReference>
<dbReference type="InterPro" id="IPR001487">
    <property type="entry name" value="Bromodomain"/>
</dbReference>
<dbReference type="InterPro" id="IPR036427">
    <property type="entry name" value="Bromodomain-like_sf"/>
</dbReference>
<dbReference type="InterPro" id="IPR018359">
    <property type="entry name" value="Bromodomain_CS"/>
</dbReference>
<dbReference type="InterPro" id="IPR037800">
    <property type="entry name" value="GCN5"/>
</dbReference>
<dbReference type="InterPro" id="IPR000182">
    <property type="entry name" value="GNAT_dom"/>
</dbReference>
<dbReference type="PANTHER" id="PTHR45750">
    <property type="entry name" value="GH11602P"/>
    <property type="match status" value="1"/>
</dbReference>
<dbReference type="PANTHER" id="PTHR45750:SF3">
    <property type="entry name" value="HISTONE ACETYLTRANSFERASE"/>
    <property type="match status" value="1"/>
</dbReference>
<dbReference type="Pfam" id="PF00583">
    <property type="entry name" value="Acetyltransf_1"/>
    <property type="match status" value="1"/>
</dbReference>
<dbReference type="Pfam" id="PF00439">
    <property type="entry name" value="Bromodomain"/>
    <property type="match status" value="1"/>
</dbReference>
<dbReference type="PRINTS" id="PR00503">
    <property type="entry name" value="BROMODOMAIN"/>
</dbReference>
<dbReference type="SMART" id="SM00297">
    <property type="entry name" value="BROMO"/>
    <property type="match status" value="1"/>
</dbReference>
<dbReference type="SUPFAM" id="SSF55729">
    <property type="entry name" value="Acyl-CoA N-acyltransferases (Nat)"/>
    <property type="match status" value="1"/>
</dbReference>
<dbReference type="SUPFAM" id="SSF47370">
    <property type="entry name" value="Bromodomain"/>
    <property type="match status" value="1"/>
</dbReference>
<dbReference type="PROSITE" id="PS00633">
    <property type="entry name" value="BROMODOMAIN_1"/>
    <property type="match status" value="1"/>
</dbReference>
<dbReference type="PROSITE" id="PS50014">
    <property type="entry name" value="BROMODOMAIN_2"/>
    <property type="match status" value="1"/>
</dbReference>
<dbReference type="PROSITE" id="PS51186">
    <property type="entry name" value="GNAT"/>
    <property type="match status" value="1"/>
</dbReference>
<feature type="chain" id="PRO_0000211200" description="Histone acetyltransferase GCN5">
    <location>
        <begin position="1"/>
        <end position="464"/>
    </location>
</feature>
<feature type="domain" description="N-acetyltransferase" evidence="4">
    <location>
        <begin position="127"/>
        <end position="282"/>
    </location>
</feature>
<feature type="domain" description="Bromo" evidence="3">
    <location>
        <begin position="356"/>
        <end position="456"/>
    </location>
</feature>
<feature type="region of interest" description="Disordered" evidence="5">
    <location>
        <begin position="1"/>
        <end position="99"/>
    </location>
</feature>
<feature type="compositionally biased region" description="Basic and acidic residues" evidence="5">
    <location>
        <begin position="20"/>
        <end position="30"/>
    </location>
</feature>
<feature type="compositionally biased region" description="Acidic residues" evidence="5">
    <location>
        <begin position="31"/>
        <end position="90"/>
    </location>
</feature>
<feature type="active site" description="Proton donor/acceptor" evidence="2">
    <location>
        <position position="200"/>
    </location>
</feature>
<feature type="binding site" evidence="2">
    <location>
        <begin position="204"/>
        <end position="206"/>
    </location>
    <ligand>
        <name>acetyl-CoA</name>
        <dbReference type="ChEBI" id="CHEBI:57288"/>
    </ligand>
</feature>
<feature type="binding site" evidence="2">
    <location>
        <begin position="211"/>
        <end position="217"/>
    </location>
    <ligand>
        <name>acetyl-CoA</name>
        <dbReference type="ChEBI" id="CHEBI:57288"/>
    </ligand>
</feature>
<feature type="binding site" evidence="2">
    <location>
        <begin position="243"/>
        <end position="246"/>
    </location>
    <ligand>
        <name>acetyl-CoA</name>
        <dbReference type="ChEBI" id="CHEBI:57288"/>
    </ligand>
</feature>
<feature type="site" description="Important for catalytic activity" evidence="1">
    <location>
        <position position="200"/>
    </location>
</feature>
<protein>
    <recommendedName>
        <fullName>Histone acetyltransferase GCN5</fullName>
        <ecNumber>2.3.1.48</ecNumber>
    </recommendedName>
</protein>
<accession>Q8WZM0</accession>
<accession>Q6C789</accession>
<sequence length="464" mass="54096">MDSDTESVKRRKSSGSESESSVRDPKRTKIEDEDFQENGIDDEDEEEEEEEAKDEGDEDDEEKGEDDEEDDEEKEGEDGEGEEEDEEEDEEKKREEEEKYVTSFNFDGVEYKYKERPAVIEEREGKIEFRVVNNDNSKENLMILTGLKNIFQKQLPKMPREYIARLVYDRSHVSMAVVRKPLTVVGGITFRPFDTRKFAEIVFCAISSTEQVRGYGAHLMNHLKDYVKATSPVMYFLTYADNYAIGYFKKQGFSKEISLDRSVWMGYIKDYEGGTLMQCSMLPRIRYLDVNKILLLQKALIHKKIRAISKSHVVRKGLDHFRDSTTPVDPMTIPGLKEAGWTPEMDELARRPKRGPHFAVMQHVLSELQNHASAWPFAQAVNRDEVPDYYEVIKEPMDLSTMEQRLEADSYKTMEEFVYDARLVFNNCRAYNNETTTYYKNANKLEKFMVAKIKEIPEYSHLVE</sequence>
<gene>
    <name type="primary">GCN5</name>
    <name type="ordered locus">YALI0E02772g</name>
</gene>
<proteinExistence type="inferred from homology"/>
<comment type="function">
    <text evidence="1">Acetylates histone H2B to form H2BK11ac and H2BK16ac, histone H3 to form H3K14ac, with a lower preference histone H4 to form H4K8ac and H4K16ac, and contributes to H2A.Z acetylation. Acetylation of histones gives a specific tag for epigenetic transcription activation (By similarity).</text>
</comment>
<comment type="catalytic activity">
    <reaction>
        <text>L-lysyl-[protein] + acetyl-CoA = N(6)-acetyl-L-lysyl-[protein] + CoA + H(+)</text>
        <dbReference type="Rhea" id="RHEA:45948"/>
        <dbReference type="Rhea" id="RHEA-COMP:9752"/>
        <dbReference type="Rhea" id="RHEA-COMP:10731"/>
        <dbReference type="ChEBI" id="CHEBI:15378"/>
        <dbReference type="ChEBI" id="CHEBI:29969"/>
        <dbReference type="ChEBI" id="CHEBI:57287"/>
        <dbReference type="ChEBI" id="CHEBI:57288"/>
        <dbReference type="ChEBI" id="CHEBI:61930"/>
        <dbReference type="EC" id="2.3.1.48"/>
    </reaction>
</comment>
<comment type="subcellular location">
    <subcellularLocation>
        <location evidence="1">Nucleus</location>
    </subcellularLocation>
</comment>
<comment type="similarity">
    <text evidence="6">Belongs to the acetyltransferase family. GCN5 subfamily.</text>
</comment>
<evidence type="ECO:0000250" key="1"/>
<evidence type="ECO:0000250" key="2">
    <source>
        <dbReference type="UniProtKB" id="Q92830"/>
    </source>
</evidence>
<evidence type="ECO:0000255" key="3">
    <source>
        <dbReference type="PROSITE-ProRule" id="PRU00035"/>
    </source>
</evidence>
<evidence type="ECO:0000255" key="4">
    <source>
        <dbReference type="PROSITE-ProRule" id="PRU00532"/>
    </source>
</evidence>
<evidence type="ECO:0000256" key="5">
    <source>
        <dbReference type="SAM" id="MobiDB-lite"/>
    </source>
</evidence>
<evidence type="ECO:0000305" key="6"/>
<name>GCN5_YARLI</name>